<keyword id="KW-0002">3D-structure</keyword>
<keyword id="KW-0687">Ribonucleoprotein</keyword>
<keyword id="KW-0689">Ribosomal protein</keyword>
<keyword id="KW-0694">RNA-binding</keyword>
<keyword id="KW-0699">rRNA-binding</keyword>
<feature type="chain" id="PRO_0000293929" description="Small ribosomal subunit protein uS3">
    <location>
        <begin position="1"/>
        <end position="216"/>
    </location>
</feature>
<feature type="domain" description="KH type-2" evidence="1">
    <location>
        <begin position="24"/>
        <end position="93"/>
    </location>
</feature>
<proteinExistence type="evidence at protein level"/>
<reference key="1">
    <citation type="submission" date="2007-02" db="EMBL/GenBank/DDBJ databases">
        <title>Complete sequence of Pyrobaculum calidifontis JCM 11548.</title>
        <authorList>
            <consortium name="US DOE Joint Genome Institute"/>
            <person name="Copeland A."/>
            <person name="Lucas S."/>
            <person name="Lapidus A."/>
            <person name="Barry K."/>
            <person name="Glavina del Rio T."/>
            <person name="Dalin E."/>
            <person name="Tice H."/>
            <person name="Pitluck S."/>
            <person name="Chain P."/>
            <person name="Malfatti S."/>
            <person name="Shin M."/>
            <person name="Vergez L."/>
            <person name="Schmutz J."/>
            <person name="Larimer F."/>
            <person name="Land M."/>
            <person name="Hauser L."/>
            <person name="Kyrpides N."/>
            <person name="Mikhailova N."/>
            <person name="Cozen A.E."/>
            <person name="Fitz-Gibbon S.T."/>
            <person name="House C.H."/>
            <person name="Saltikov C."/>
            <person name="Lowe T.M."/>
            <person name="Richardson P."/>
        </authorList>
    </citation>
    <scope>NUCLEOTIDE SEQUENCE [LARGE SCALE GENOMIC DNA]</scope>
    <source>
        <strain>DSM 21063 / JCM 11548 / VA1</strain>
    </source>
</reference>
<name>RS3_PYRCJ</name>
<dbReference type="EMBL" id="CP000561">
    <property type="protein sequence ID" value="ABO07980.1"/>
    <property type="status" value="ALT_INIT"/>
    <property type="molecule type" value="Genomic_DNA"/>
</dbReference>
<dbReference type="RefSeq" id="WP_193322979.1">
    <property type="nucleotide sequence ID" value="NC_009073.1"/>
</dbReference>
<dbReference type="PDB" id="9E71">
    <property type="method" value="EM"/>
    <property type="resolution" value="2.36 A"/>
    <property type="chains" value="BC=1-216"/>
</dbReference>
<dbReference type="PDB" id="9E7F">
    <property type="method" value="EM"/>
    <property type="resolution" value="2.53 A"/>
    <property type="chains" value="BC=1-216"/>
</dbReference>
<dbReference type="PDBsum" id="9E71"/>
<dbReference type="PDBsum" id="9E7F"/>
<dbReference type="EMDB" id="EMD-47628"/>
<dbReference type="EMDB" id="EMD-47668"/>
<dbReference type="SMR" id="A3MTL3"/>
<dbReference type="STRING" id="410359.Pcal_0553"/>
<dbReference type="GeneID" id="4909827"/>
<dbReference type="KEGG" id="pcl:Pcal_0553"/>
<dbReference type="eggNOG" id="arCOG04097">
    <property type="taxonomic scope" value="Archaea"/>
</dbReference>
<dbReference type="HOGENOM" id="CLU_058591_1_1_2"/>
<dbReference type="OrthoDB" id="9126at2157"/>
<dbReference type="Proteomes" id="UP000001431">
    <property type="component" value="Chromosome"/>
</dbReference>
<dbReference type="GO" id="GO:0022627">
    <property type="term" value="C:cytosolic small ribosomal subunit"/>
    <property type="evidence" value="ECO:0007669"/>
    <property type="project" value="TreeGrafter"/>
</dbReference>
<dbReference type="GO" id="GO:0019843">
    <property type="term" value="F:rRNA binding"/>
    <property type="evidence" value="ECO:0007669"/>
    <property type="project" value="UniProtKB-UniRule"/>
</dbReference>
<dbReference type="GO" id="GO:0003735">
    <property type="term" value="F:structural constituent of ribosome"/>
    <property type="evidence" value="ECO:0007669"/>
    <property type="project" value="InterPro"/>
</dbReference>
<dbReference type="GO" id="GO:0006412">
    <property type="term" value="P:translation"/>
    <property type="evidence" value="ECO:0007669"/>
    <property type="project" value="UniProtKB-UniRule"/>
</dbReference>
<dbReference type="CDD" id="cd02411">
    <property type="entry name" value="KH-II_30S_S3_arch"/>
    <property type="match status" value="1"/>
</dbReference>
<dbReference type="FunFam" id="3.30.300.20:FF:000001">
    <property type="entry name" value="30S ribosomal protein S3"/>
    <property type="match status" value="1"/>
</dbReference>
<dbReference type="Gene3D" id="3.30.300.20">
    <property type="match status" value="1"/>
</dbReference>
<dbReference type="Gene3D" id="3.30.1140.32">
    <property type="entry name" value="Ribosomal protein S3, C-terminal domain"/>
    <property type="match status" value="1"/>
</dbReference>
<dbReference type="HAMAP" id="MF_01309_A">
    <property type="entry name" value="Ribosomal_uS3_A"/>
    <property type="match status" value="1"/>
</dbReference>
<dbReference type="InterPro" id="IPR004087">
    <property type="entry name" value="KH_dom"/>
</dbReference>
<dbReference type="InterPro" id="IPR015946">
    <property type="entry name" value="KH_dom-like_a/b"/>
</dbReference>
<dbReference type="InterPro" id="IPR004044">
    <property type="entry name" value="KH_dom_type_2"/>
</dbReference>
<dbReference type="InterPro" id="IPR009019">
    <property type="entry name" value="KH_sf_prok-type"/>
</dbReference>
<dbReference type="InterPro" id="IPR036419">
    <property type="entry name" value="Ribosomal_S3_C_sf"/>
</dbReference>
<dbReference type="InterPro" id="IPR027488">
    <property type="entry name" value="Ribosomal_uS3_arc"/>
</dbReference>
<dbReference type="InterPro" id="IPR001351">
    <property type="entry name" value="Ribosomal_uS3_C"/>
</dbReference>
<dbReference type="InterPro" id="IPR005703">
    <property type="entry name" value="Ribosomal_uS3_euk/arc"/>
</dbReference>
<dbReference type="NCBIfam" id="NF003219">
    <property type="entry name" value="PRK04191.1"/>
    <property type="match status" value="1"/>
</dbReference>
<dbReference type="NCBIfam" id="TIGR01008">
    <property type="entry name" value="uS3_euk_arch"/>
    <property type="match status" value="1"/>
</dbReference>
<dbReference type="PANTHER" id="PTHR11760">
    <property type="entry name" value="30S/40S RIBOSOMAL PROTEIN S3"/>
    <property type="match status" value="1"/>
</dbReference>
<dbReference type="PANTHER" id="PTHR11760:SF32">
    <property type="entry name" value="SMALL RIBOSOMAL SUBUNIT PROTEIN US3"/>
    <property type="match status" value="1"/>
</dbReference>
<dbReference type="Pfam" id="PF07650">
    <property type="entry name" value="KH_2"/>
    <property type="match status" value="1"/>
</dbReference>
<dbReference type="Pfam" id="PF00189">
    <property type="entry name" value="Ribosomal_S3_C"/>
    <property type="match status" value="1"/>
</dbReference>
<dbReference type="SMART" id="SM00322">
    <property type="entry name" value="KH"/>
    <property type="match status" value="1"/>
</dbReference>
<dbReference type="SUPFAM" id="SSF54814">
    <property type="entry name" value="Prokaryotic type KH domain (KH-domain type II)"/>
    <property type="match status" value="1"/>
</dbReference>
<dbReference type="SUPFAM" id="SSF54821">
    <property type="entry name" value="Ribosomal protein S3 C-terminal domain"/>
    <property type="match status" value="1"/>
</dbReference>
<dbReference type="PROSITE" id="PS50823">
    <property type="entry name" value="KH_TYPE_2"/>
    <property type="match status" value="1"/>
</dbReference>
<sequence length="216" mass="24644">MSTAQRRLPVYKKILEENKKKWMIKEFLEYRLAKYGYIDSEILKTPLGTRIVIYAERPSRIIGRKGAIVKEVSSILANKLGVENPQIDVIDVSKIEAPELFPKVVAYRIANAMARGVRFRRVMFVAVRQLMEAGAKGFEIVVSGKLSTERAKFEKITYGKLYKIGYDAKNRVRRAVVHVLLKPGIYGIEVRITPATLRYSDEYKIKPPTRPEAAAQ</sequence>
<accession>A3MTL3</accession>
<gene>
    <name evidence="1" type="primary">rps3</name>
    <name type="ordered locus">Pcal_0553</name>
</gene>
<protein>
    <recommendedName>
        <fullName evidence="1">Small ribosomal subunit protein uS3</fullName>
    </recommendedName>
    <alternativeName>
        <fullName evidence="2">30S ribosomal protein S3</fullName>
    </alternativeName>
</protein>
<organism>
    <name type="scientific">Pyrobaculum calidifontis (strain DSM 21063 / JCM 11548 / VA1)</name>
    <dbReference type="NCBI Taxonomy" id="410359"/>
    <lineage>
        <taxon>Archaea</taxon>
        <taxon>Thermoproteota</taxon>
        <taxon>Thermoprotei</taxon>
        <taxon>Thermoproteales</taxon>
        <taxon>Thermoproteaceae</taxon>
        <taxon>Pyrobaculum</taxon>
    </lineage>
</organism>
<evidence type="ECO:0000255" key="1">
    <source>
        <dbReference type="HAMAP-Rule" id="MF_01309"/>
    </source>
</evidence>
<evidence type="ECO:0000305" key="2"/>
<comment type="function">
    <text evidence="1">Binds the lower part of the 30S subunit head.</text>
</comment>
<comment type="subunit">
    <text evidence="1">Part of the 30S ribosomal subunit.</text>
</comment>
<comment type="similarity">
    <text evidence="1">Belongs to the universal ribosomal protein uS3 family.</text>
</comment>
<comment type="sequence caution" evidence="2">
    <conflict type="erroneous initiation">
        <sequence resource="EMBL-CDS" id="ABO07980"/>
    </conflict>
    <text>Extended N-terminus.</text>
</comment>